<gene>
    <name evidence="1" type="primary">mdh</name>
    <name type="ordered locus">Shewmr7_0614</name>
</gene>
<sequence>MKVAVLGAAGGIGQALALLLKTQLPAGSQLSLYDIAPVTPGVAVDLSHIPTAVEIKGFAGEDPTPALVGADVVLISAGVARKPGMDRSDLFNINAGIVRNLIEKVAVTCPKALVGIITNPVNTTVAIAAEVLKKAGVYDKNRLFGVTTLDVIRSETFIAELKGLNVADVKVNVIGGHSGVTILPLLSQVEGVTFSDEEVASLTKRIQNAGTEVVEAKAGGGSATLSMGQAACRFGMSLVRGLQGEANIVECAYVDGGSEHAEFFAQPVLLGKNGIEKVLPYGEVSAFEANARDSMLDTLKGDIKLGVDFVK</sequence>
<reference key="1">
    <citation type="submission" date="2006-08" db="EMBL/GenBank/DDBJ databases">
        <title>Complete sequence of chromosome 1 of Shewanella sp. MR-7.</title>
        <authorList>
            <person name="Copeland A."/>
            <person name="Lucas S."/>
            <person name="Lapidus A."/>
            <person name="Barry K."/>
            <person name="Detter J.C."/>
            <person name="Glavina del Rio T."/>
            <person name="Hammon N."/>
            <person name="Israni S."/>
            <person name="Dalin E."/>
            <person name="Tice H."/>
            <person name="Pitluck S."/>
            <person name="Kiss H."/>
            <person name="Brettin T."/>
            <person name="Bruce D."/>
            <person name="Han C."/>
            <person name="Tapia R."/>
            <person name="Gilna P."/>
            <person name="Schmutz J."/>
            <person name="Larimer F."/>
            <person name="Land M."/>
            <person name="Hauser L."/>
            <person name="Kyrpides N."/>
            <person name="Mikhailova N."/>
            <person name="Nealson K."/>
            <person name="Konstantinidis K."/>
            <person name="Klappenbach J."/>
            <person name="Tiedje J."/>
            <person name="Richardson P."/>
        </authorList>
    </citation>
    <scope>NUCLEOTIDE SEQUENCE [LARGE SCALE GENOMIC DNA]</scope>
    <source>
        <strain>MR-7</strain>
    </source>
</reference>
<name>MDH_SHESR</name>
<evidence type="ECO:0000255" key="1">
    <source>
        <dbReference type="HAMAP-Rule" id="MF_01516"/>
    </source>
</evidence>
<organism>
    <name type="scientific">Shewanella sp. (strain MR-7)</name>
    <dbReference type="NCBI Taxonomy" id="60481"/>
    <lineage>
        <taxon>Bacteria</taxon>
        <taxon>Pseudomonadati</taxon>
        <taxon>Pseudomonadota</taxon>
        <taxon>Gammaproteobacteria</taxon>
        <taxon>Alteromonadales</taxon>
        <taxon>Shewanellaceae</taxon>
        <taxon>Shewanella</taxon>
    </lineage>
</organism>
<keyword id="KW-0520">NAD</keyword>
<keyword id="KW-0560">Oxidoreductase</keyword>
<keyword id="KW-0816">Tricarboxylic acid cycle</keyword>
<dbReference type="EC" id="1.1.1.37" evidence="1"/>
<dbReference type="EMBL" id="CP000444">
    <property type="protein sequence ID" value="ABI41617.1"/>
    <property type="molecule type" value="Genomic_DNA"/>
</dbReference>
<dbReference type="SMR" id="Q0HZ38"/>
<dbReference type="KEGG" id="shm:Shewmr7_0614"/>
<dbReference type="HOGENOM" id="CLU_047181_1_0_6"/>
<dbReference type="GO" id="GO:0005737">
    <property type="term" value="C:cytoplasm"/>
    <property type="evidence" value="ECO:0007669"/>
    <property type="project" value="TreeGrafter"/>
</dbReference>
<dbReference type="GO" id="GO:0030060">
    <property type="term" value="F:L-malate dehydrogenase (NAD+) activity"/>
    <property type="evidence" value="ECO:0007669"/>
    <property type="project" value="UniProtKB-UniRule"/>
</dbReference>
<dbReference type="GO" id="GO:0006108">
    <property type="term" value="P:malate metabolic process"/>
    <property type="evidence" value="ECO:0007669"/>
    <property type="project" value="InterPro"/>
</dbReference>
<dbReference type="GO" id="GO:0006099">
    <property type="term" value="P:tricarboxylic acid cycle"/>
    <property type="evidence" value="ECO:0007669"/>
    <property type="project" value="UniProtKB-UniRule"/>
</dbReference>
<dbReference type="CDD" id="cd01337">
    <property type="entry name" value="MDH_glyoxysomal_mitochondrial"/>
    <property type="match status" value="1"/>
</dbReference>
<dbReference type="FunFam" id="3.40.50.720:FF:000017">
    <property type="entry name" value="Malate dehydrogenase"/>
    <property type="match status" value="1"/>
</dbReference>
<dbReference type="FunFam" id="3.90.110.10:FF:000001">
    <property type="entry name" value="Malate dehydrogenase"/>
    <property type="match status" value="1"/>
</dbReference>
<dbReference type="Gene3D" id="3.90.110.10">
    <property type="entry name" value="Lactate dehydrogenase/glycoside hydrolase, family 4, C-terminal"/>
    <property type="match status" value="1"/>
</dbReference>
<dbReference type="Gene3D" id="3.40.50.720">
    <property type="entry name" value="NAD(P)-binding Rossmann-like Domain"/>
    <property type="match status" value="1"/>
</dbReference>
<dbReference type="HAMAP" id="MF_01516">
    <property type="entry name" value="Malate_dehydrog_1"/>
    <property type="match status" value="1"/>
</dbReference>
<dbReference type="InterPro" id="IPR001557">
    <property type="entry name" value="L-lactate/malate_DH"/>
</dbReference>
<dbReference type="InterPro" id="IPR022383">
    <property type="entry name" value="Lactate/malate_DH_C"/>
</dbReference>
<dbReference type="InterPro" id="IPR001236">
    <property type="entry name" value="Lactate/malate_DH_N"/>
</dbReference>
<dbReference type="InterPro" id="IPR015955">
    <property type="entry name" value="Lactate_DH/Glyco_Ohase_4_C"/>
</dbReference>
<dbReference type="InterPro" id="IPR001252">
    <property type="entry name" value="Malate_DH_AS"/>
</dbReference>
<dbReference type="InterPro" id="IPR010097">
    <property type="entry name" value="Malate_DH_type1"/>
</dbReference>
<dbReference type="InterPro" id="IPR023958">
    <property type="entry name" value="Malate_DH_type1_bac"/>
</dbReference>
<dbReference type="InterPro" id="IPR036291">
    <property type="entry name" value="NAD(P)-bd_dom_sf"/>
</dbReference>
<dbReference type="NCBIfam" id="TIGR01772">
    <property type="entry name" value="MDH_euk_gproteo"/>
    <property type="match status" value="1"/>
</dbReference>
<dbReference type="PANTHER" id="PTHR11540">
    <property type="entry name" value="MALATE AND LACTATE DEHYDROGENASE"/>
    <property type="match status" value="1"/>
</dbReference>
<dbReference type="PANTHER" id="PTHR11540:SF16">
    <property type="entry name" value="MALATE DEHYDROGENASE, MITOCHONDRIAL"/>
    <property type="match status" value="1"/>
</dbReference>
<dbReference type="Pfam" id="PF02866">
    <property type="entry name" value="Ldh_1_C"/>
    <property type="match status" value="1"/>
</dbReference>
<dbReference type="Pfam" id="PF00056">
    <property type="entry name" value="Ldh_1_N"/>
    <property type="match status" value="1"/>
</dbReference>
<dbReference type="PIRSF" id="PIRSF000102">
    <property type="entry name" value="Lac_mal_DH"/>
    <property type="match status" value="1"/>
</dbReference>
<dbReference type="SUPFAM" id="SSF56327">
    <property type="entry name" value="LDH C-terminal domain-like"/>
    <property type="match status" value="1"/>
</dbReference>
<dbReference type="SUPFAM" id="SSF51735">
    <property type="entry name" value="NAD(P)-binding Rossmann-fold domains"/>
    <property type="match status" value="1"/>
</dbReference>
<dbReference type="PROSITE" id="PS00068">
    <property type="entry name" value="MDH"/>
    <property type="match status" value="1"/>
</dbReference>
<protein>
    <recommendedName>
        <fullName evidence="1">Malate dehydrogenase</fullName>
        <ecNumber evidence="1">1.1.1.37</ecNumber>
    </recommendedName>
</protein>
<proteinExistence type="inferred from homology"/>
<feature type="chain" id="PRO_0000294306" description="Malate dehydrogenase">
    <location>
        <begin position="1"/>
        <end position="311"/>
    </location>
</feature>
<feature type="active site" description="Proton acceptor" evidence="1">
    <location>
        <position position="177"/>
    </location>
</feature>
<feature type="binding site" evidence="1">
    <location>
        <begin position="7"/>
        <end position="13"/>
    </location>
    <ligand>
        <name>NAD(+)</name>
        <dbReference type="ChEBI" id="CHEBI:57540"/>
    </ligand>
</feature>
<feature type="binding site" evidence="1">
    <location>
        <position position="34"/>
    </location>
    <ligand>
        <name>NAD(+)</name>
        <dbReference type="ChEBI" id="CHEBI:57540"/>
    </ligand>
</feature>
<feature type="binding site" evidence="1">
    <location>
        <position position="81"/>
    </location>
    <ligand>
        <name>substrate</name>
    </ligand>
</feature>
<feature type="binding site" evidence="1">
    <location>
        <position position="87"/>
    </location>
    <ligand>
        <name>substrate</name>
    </ligand>
</feature>
<feature type="binding site" evidence="1">
    <location>
        <position position="94"/>
    </location>
    <ligand>
        <name>NAD(+)</name>
        <dbReference type="ChEBI" id="CHEBI:57540"/>
    </ligand>
</feature>
<feature type="binding site" evidence="1">
    <location>
        <begin position="117"/>
        <end position="119"/>
    </location>
    <ligand>
        <name>NAD(+)</name>
        <dbReference type="ChEBI" id="CHEBI:57540"/>
    </ligand>
</feature>
<feature type="binding site" evidence="1">
    <location>
        <position position="119"/>
    </location>
    <ligand>
        <name>substrate</name>
    </ligand>
</feature>
<feature type="binding site" evidence="1">
    <location>
        <position position="153"/>
    </location>
    <ligand>
        <name>substrate</name>
    </ligand>
</feature>
<feature type="binding site" evidence="1">
    <location>
        <position position="227"/>
    </location>
    <ligand>
        <name>NAD(+)</name>
        <dbReference type="ChEBI" id="CHEBI:57540"/>
    </ligand>
</feature>
<accession>Q0HZ38</accession>
<comment type="function">
    <text evidence="1">Catalyzes the reversible oxidation of malate to oxaloacetate.</text>
</comment>
<comment type="catalytic activity">
    <reaction evidence="1">
        <text>(S)-malate + NAD(+) = oxaloacetate + NADH + H(+)</text>
        <dbReference type="Rhea" id="RHEA:21432"/>
        <dbReference type="ChEBI" id="CHEBI:15378"/>
        <dbReference type="ChEBI" id="CHEBI:15589"/>
        <dbReference type="ChEBI" id="CHEBI:16452"/>
        <dbReference type="ChEBI" id="CHEBI:57540"/>
        <dbReference type="ChEBI" id="CHEBI:57945"/>
        <dbReference type="EC" id="1.1.1.37"/>
    </reaction>
</comment>
<comment type="subunit">
    <text evidence="1">Homodimer.</text>
</comment>
<comment type="similarity">
    <text evidence="1">Belongs to the LDH/MDH superfamily. MDH type 1 family.</text>
</comment>